<protein>
    <recommendedName>
        <fullName evidence="1">GTPase Era</fullName>
    </recommendedName>
</protein>
<dbReference type="EMBL" id="AE017226">
    <property type="protein sequence ID" value="AAS12409.1"/>
    <property type="molecule type" value="Genomic_DNA"/>
</dbReference>
<dbReference type="RefSeq" id="NP_972498.1">
    <property type="nucleotide sequence ID" value="NC_002967.9"/>
</dbReference>
<dbReference type="RefSeq" id="WP_002679589.1">
    <property type="nucleotide sequence ID" value="NC_002967.9"/>
</dbReference>
<dbReference type="SMR" id="Q73LG9"/>
<dbReference type="STRING" id="243275.TDE_1895"/>
<dbReference type="PaxDb" id="243275-TDE_1895"/>
<dbReference type="GeneID" id="2739124"/>
<dbReference type="KEGG" id="tde:TDE_1895"/>
<dbReference type="PATRIC" id="fig|243275.7.peg.1794"/>
<dbReference type="eggNOG" id="COG1159">
    <property type="taxonomic scope" value="Bacteria"/>
</dbReference>
<dbReference type="HOGENOM" id="CLU_038009_1_0_12"/>
<dbReference type="OrthoDB" id="9805918at2"/>
<dbReference type="Proteomes" id="UP000008212">
    <property type="component" value="Chromosome"/>
</dbReference>
<dbReference type="GO" id="GO:0005829">
    <property type="term" value="C:cytosol"/>
    <property type="evidence" value="ECO:0007669"/>
    <property type="project" value="TreeGrafter"/>
</dbReference>
<dbReference type="GO" id="GO:0005886">
    <property type="term" value="C:plasma membrane"/>
    <property type="evidence" value="ECO:0007669"/>
    <property type="project" value="UniProtKB-SubCell"/>
</dbReference>
<dbReference type="GO" id="GO:0005525">
    <property type="term" value="F:GTP binding"/>
    <property type="evidence" value="ECO:0007669"/>
    <property type="project" value="UniProtKB-UniRule"/>
</dbReference>
<dbReference type="GO" id="GO:0003924">
    <property type="term" value="F:GTPase activity"/>
    <property type="evidence" value="ECO:0007669"/>
    <property type="project" value="UniProtKB-UniRule"/>
</dbReference>
<dbReference type="GO" id="GO:0043024">
    <property type="term" value="F:ribosomal small subunit binding"/>
    <property type="evidence" value="ECO:0007669"/>
    <property type="project" value="TreeGrafter"/>
</dbReference>
<dbReference type="GO" id="GO:0070181">
    <property type="term" value="F:small ribosomal subunit rRNA binding"/>
    <property type="evidence" value="ECO:0007669"/>
    <property type="project" value="UniProtKB-UniRule"/>
</dbReference>
<dbReference type="GO" id="GO:0000028">
    <property type="term" value="P:ribosomal small subunit assembly"/>
    <property type="evidence" value="ECO:0007669"/>
    <property type="project" value="TreeGrafter"/>
</dbReference>
<dbReference type="CDD" id="cd04163">
    <property type="entry name" value="Era"/>
    <property type="match status" value="1"/>
</dbReference>
<dbReference type="CDD" id="cd22534">
    <property type="entry name" value="KH-II_Era"/>
    <property type="match status" value="1"/>
</dbReference>
<dbReference type="Gene3D" id="3.30.300.20">
    <property type="match status" value="1"/>
</dbReference>
<dbReference type="Gene3D" id="3.40.50.300">
    <property type="entry name" value="P-loop containing nucleotide triphosphate hydrolases"/>
    <property type="match status" value="1"/>
</dbReference>
<dbReference type="HAMAP" id="MF_00367">
    <property type="entry name" value="GTPase_Era"/>
    <property type="match status" value="1"/>
</dbReference>
<dbReference type="InterPro" id="IPR030388">
    <property type="entry name" value="G_ERA_dom"/>
</dbReference>
<dbReference type="InterPro" id="IPR006073">
    <property type="entry name" value="GTP-bd"/>
</dbReference>
<dbReference type="InterPro" id="IPR005662">
    <property type="entry name" value="GTPase_Era-like"/>
</dbReference>
<dbReference type="InterPro" id="IPR015946">
    <property type="entry name" value="KH_dom-like_a/b"/>
</dbReference>
<dbReference type="InterPro" id="IPR004044">
    <property type="entry name" value="KH_dom_type_2"/>
</dbReference>
<dbReference type="InterPro" id="IPR009019">
    <property type="entry name" value="KH_sf_prok-type"/>
</dbReference>
<dbReference type="InterPro" id="IPR027417">
    <property type="entry name" value="P-loop_NTPase"/>
</dbReference>
<dbReference type="InterPro" id="IPR005225">
    <property type="entry name" value="Small_GTP-bd"/>
</dbReference>
<dbReference type="NCBIfam" id="TIGR00436">
    <property type="entry name" value="era"/>
    <property type="match status" value="1"/>
</dbReference>
<dbReference type="NCBIfam" id="NF000908">
    <property type="entry name" value="PRK00089.1"/>
    <property type="match status" value="1"/>
</dbReference>
<dbReference type="NCBIfam" id="TIGR00231">
    <property type="entry name" value="small_GTP"/>
    <property type="match status" value="1"/>
</dbReference>
<dbReference type="PANTHER" id="PTHR42698">
    <property type="entry name" value="GTPASE ERA"/>
    <property type="match status" value="1"/>
</dbReference>
<dbReference type="PANTHER" id="PTHR42698:SF1">
    <property type="entry name" value="GTPASE ERA, MITOCHONDRIAL"/>
    <property type="match status" value="1"/>
</dbReference>
<dbReference type="Pfam" id="PF07650">
    <property type="entry name" value="KH_2"/>
    <property type="match status" value="1"/>
</dbReference>
<dbReference type="Pfam" id="PF01926">
    <property type="entry name" value="MMR_HSR1"/>
    <property type="match status" value="1"/>
</dbReference>
<dbReference type="SUPFAM" id="SSF52540">
    <property type="entry name" value="P-loop containing nucleoside triphosphate hydrolases"/>
    <property type="match status" value="1"/>
</dbReference>
<dbReference type="SUPFAM" id="SSF54814">
    <property type="entry name" value="Prokaryotic type KH domain (KH-domain type II)"/>
    <property type="match status" value="1"/>
</dbReference>
<dbReference type="PROSITE" id="PS51713">
    <property type="entry name" value="G_ERA"/>
    <property type="match status" value="1"/>
</dbReference>
<evidence type="ECO:0000255" key="1">
    <source>
        <dbReference type="HAMAP-Rule" id="MF_00367"/>
    </source>
</evidence>
<evidence type="ECO:0000255" key="2">
    <source>
        <dbReference type="PROSITE-ProRule" id="PRU01050"/>
    </source>
</evidence>
<keyword id="KW-0997">Cell inner membrane</keyword>
<keyword id="KW-1003">Cell membrane</keyword>
<keyword id="KW-0963">Cytoplasm</keyword>
<keyword id="KW-0342">GTP-binding</keyword>
<keyword id="KW-0472">Membrane</keyword>
<keyword id="KW-0547">Nucleotide-binding</keyword>
<keyword id="KW-1185">Reference proteome</keyword>
<keyword id="KW-0690">Ribosome biogenesis</keyword>
<keyword id="KW-0694">RNA-binding</keyword>
<keyword id="KW-0699">rRNA-binding</keyword>
<name>ERA_TREDE</name>
<feature type="chain" id="PRO_1000079764" description="GTPase Era">
    <location>
        <begin position="1"/>
        <end position="294"/>
    </location>
</feature>
<feature type="domain" description="Era-type G" evidence="2">
    <location>
        <begin position="2"/>
        <end position="171"/>
    </location>
</feature>
<feature type="domain" description="KH type-2" evidence="1">
    <location>
        <begin position="202"/>
        <end position="280"/>
    </location>
</feature>
<feature type="region of interest" description="G1" evidence="2">
    <location>
        <begin position="10"/>
        <end position="17"/>
    </location>
</feature>
<feature type="region of interest" description="G2" evidence="2">
    <location>
        <begin position="36"/>
        <end position="40"/>
    </location>
</feature>
<feature type="region of interest" description="G3" evidence="2">
    <location>
        <begin position="57"/>
        <end position="60"/>
    </location>
</feature>
<feature type="region of interest" description="G4" evidence="2">
    <location>
        <begin position="119"/>
        <end position="122"/>
    </location>
</feature>
<feature type="region of interest" description="G5" evidence="2">
    <location>
        <begin position="150"/>
        <end position="152"/>
    </location>
</feature>
<feature type="binding site" evidence="1">
    <location>
        <begin position="10"/>
        <end position="17"/>
    </location>
    <ligand>
        <name>GTP</name>
        <dbReference type="ChEBI" id="CHEBI:37565"/>
    </ligand>
</feature>
<feature type="binding site" evidence="1">
    <location>
        <begin position="57"/>
        <end position="61"/>
    </location>
    <ligand>
        <name>GTP</name>
        <dbReference type="ChEBI" id="CHEBI:37565"/>
    </ligand>
</feature>
<feature type="binding site" evidence="1">
    <location>
        <begin position="119"/>
        <end position="122"/>
    </location>
    <ligand>
        <name>GTP</name>
        <dbReference type="ChEBI" id="CHEBI:37565"/>
    </ligand>
</feature>
<reference key="1">
    <citation type="journal article" date="2004" name="Proc. Natl. Acad. Sci. U.S.A.">
        <title>Comparison of the genome of the oral pathogen Treponema denticola with other spirochete genomes.</title>
        <authorList>
            <person name="Seshadri R."/>
            <person name="Myers G.S.A."/>
            <person name="Tettelin H."/>
            <person name="Eisen J.A."/>
            <person name="Heidelberg J.F."/>
            <person name="Dodson R.J."/>
            <person name="Davidsen T.M."/>
            <person name="DeBoy R.T."/>
            <person name="Fouts D.E."/>
            <person name="Haft D.H."/>
            <person name="Selengut J."/>
            <person name="Ren Q."/>
            <person name="Brinkac L.M."/>
            <person name="Madupu R."/>
            <person name="Kolonay J.F."/>
            <person name="Durkin S.A."/>
            <person name="Daugherty S.C."/>
            <person name="Shetty J."/>
            <person name="Shvartsbeyn A."/>
            <person name="Gebregeorgis E."/>
            <person name="Geer K."/>
            <person name="Tsegaye G."/>
            <person name="Malek J.A."/>
            <person name="Ayodeji B."/>
            <person name="Shatsman S."/>
            <person name="McLeod M.P."/>
            <person name="Smajs D."/>
            <person name="Howell J.K."/>
            <person name="Pal S."/>
            <person name="Amin A."/>
            <person name="Vashisth P."/>
            <person name="McNeill T.Z."/>
            <person name="Xiang Q."/>
            <person name="Sodergren E."/>
            <person name="Baca E."/>
            <person name="Weinstock G.M."/>
            <person name="Norris S.J."/>
            <person name="Fraser C.M."/>
            <person name="Paulsen I.T."/>
        </authorList>
    </citation>
    <scope>NUCLEOTIDE SEQUENCE [LARGE SCALE GENOMIC DNA]</scope>
    <source>
        <strain>ATCC 35405 / DSM 14222 / CIP 103919 / JCM 8153 / KCTC 15104</strain>
    </source>
</reference>
<comment type="function">
    <text evidence="1">An essential GTPase that binds both GDP and GTP, with rapid nucleotide exchange. Plays a role in 16S rRNA processing and 30S ribosomal subunit biogenesis and possibly also in cell cycle regulation and energy metabolism.</text>
</comment>
<comment type="subunit">
    <text evidence="1">Monomer.</text>
</comment>
<comment type="subcellular location">
    <subcellularLocation>
        <location>Cytoplasm</location>
    </subcellularLocation>
    <subcellularLocation>
        <location evidence="1">Cell inner membrane</location>
        <topology evidence="1">Peripheral membrane protein</topology>
    </subcellularLocation>
</comment>
<comment type="similarity">
    <text evidence="1 2">Belongs to the TRAFAC class TrmE-Era-EngA-EngB-Septin-like GTPase superfamily. Era GTPase family.</text>
</comment>
<gene>
    <name evidence="1" type="primary">era</name>
    <name type="ordered locus">TDE_1895</name>
</gene>
<organism>
    <name type="scientific">Treponema denticola (strain ATCC 35405 / DSM 14222 / CIP 103919 / JCM 8153 / KCTC 15104)</name>
    <dbReference type="NCBI Taxonomy" id="243275"/>
    <lineage>
        <taxon>Bacteria</taxon>
        <taxon>Pseudomonadati</taxon>
        <taxon>Spirochaetota</taxon>
        <taxon>Spirochaetia</taxon>
        <taxon>Spirochaetales</taxon>
        <taxon>Treponemataceae</taxon>
        <taxon>Treponema</taxon>
    </lineage>
</organism>
<proteinExistence type="inferred from homology"/>
<sequence length="294" mass="33180">MNSGVVTIIGRPSAGKSTFLNTASGEKVSIVSAIPQTTRNAIRGIVNTTKGQIVFIDTPGYHKSEKKLNLKLQEIAKTRLEEGDAVLYLIDLSREFGEEEKNICSLLIPLQNKTVIGLNKADLKSSKADLVKKELLSLLPDIPQERIFEISALKDEGINEILSLLIELLPEGEALYPEDIYTDQDVVFRITEIIREQAILHTREEIPHALYAGVEDAEMHKNGKELWVRAFLYVEKESQKAMLIGKGAAVIKSIRIKSMAELRKIFPYKVQLDLQVRVNKNWRQKDNIIKKISY</sequence>
<accession>Q73LG9</accession>